<keyword id="KW-1003">Cell membrane</keyword>
<keyword id="KW-0472">Membrane</keyword>
<keyword id="KW-1185">Reference proteome</keyword>
<keyword id="KW-0812">Transmembrane</keyword>
<keyword id="KW-1133">Transmembrane helix</keyword>
<name>Y4157_DESHY</name>
<sequence>MVQAAILFILAGLAEIGGGYLVWLWLREARPYWYGVIGAIILVFYGIIPTLQKFPSFGRVYAAYGGVFIILAVLWGWGVDKKMPDTYDWIGAAICLVGVTVMLWAPRQ</sequence>
<dbReference type="EMBL" id="AP008230">
    <property type="protein sequence ID" value="BAE85946.1"/>
    <property type="molecule type" value="Genomic_DNA"/>
</dbReference>
<dbReference type="SMR" id="Q24PU6"/>
<dbReference type="STRING" id="138119.DSY4157"/>
<dbReference type="KEGG" id="dsy:DSY4157"/>
<dbReference type="eggNOG" id="COG1742">
    <property type="taxonomic scope" value="Bacteria"/>
</dbReference>
<dbReference type="HOGENOM" id="CLU_117653_0_1_9"/>
<dbReference type="Proteomes" id="UP000001946">
    <property type="component" value="Chromosome"/>
</dbReference>
<dbReference type="GO" id="GO:0005886">
    <property type="term" value="C:plasma membrane"/>
    <property type="evidence" value="ECO:0007669"/>
    <property type="project" value="UniProtKB-SubCell"/>
</dbReference>
<dbReference type="HAMAP" id="MF_00010">
    <property type="entry name" value="UPF0060"/>
    <property type="match status" value="1"/>
</dbReference>
<dbReference type="InterPro" id="IPR003844">
    <property type="entry name" value="UPF0060"/>
</dbReference>
<dbReference type="NCBIfam" id="NF002586">
    <property type="entry name" value="PRK02237.1"/>
    <property type="match status" value="1"/>
</dbReference>
<dbReference type="PANTHER" id="PTHR36116">
    <property type="entry name" value="UPF0060 MEMBRANE PROTEIN YNFA"/>
    <property type="match status" value="1"/>
</dbReference>
<dbReference type="PANTHER" id="PTHR36116:SF1">
    <property type="entry name" value="UPF0060 MEMBRANE PROTEIN YNFA"/>
    <property type="match status" value="1"/>
</dbReference>
<dbReference type="Pfam" id="PF02694">
    <property type="entry name" value="UPF0060"/>
    <property type="match status" value="1"/>
</dbReference>
<dbReference type="SUPFAM" id="SSF103481">
    <property type="entry name" value="Multidrug resistance efflux transporter EmrE"/>
    <property type="match status" value="1"/>
</dbReference>
<evidence type="ECO:0000255" key="1">
    <source>
        <dbReference type="HAMAP-Rule" id="MF_00010"/>
    </source>
</evidence>
<gene>
    <name type="ordered locus">DSY4157</name>
</gene>
<accession>Q24PU6</accession>
<reference key="1">
    <citation type="journal article" date="2006" name="J. Bacteriol.">
        <title>Complete genome sequence of the dehalorespiring bacterium Desulfitobacterium hafniense Y51 and comparison with Dehalococcoides ethenogenes 195.</title>
        <authorList>
            <person name="Nonaka H."/>
            <person name="Keresztes G."/>
            <person name="Shinoda Y."/>
            <person name="Ikenaga Y."/>
            <person name="Abe M."/>
            <person name="Naito K."/>
            <person name="Inatomi K."/>
            <person name="Furukawa K."/>
            <person name="Inui M."/>
            <person name="Yukawa H."/>
        </authorList>
    </citation>
    <scope>NUCLEOTIDE SEQUENCE [LARGE SCALE GENOMIC DNA]</scope>
    <source>
        <strain>Y51</strain>
    </source>
</reference>
<protein>
    <recommendedName>
        <fullName evidence="1">UPF0060 membrane protein DSY4157</fullName>
    </recommendedName>
</protein>
<proteinExistence type="inferred from homology"/>
<comment type="subcellular location">
    <subcellularLocation>
        <location evidence="1">Cell membrane</location>
        <topology evidence="1">Multi-pass membrane protein</topology>
    </subcellularLocation>
</comment>
<comment type="similarity">
    <text evidence="1">Belongs to the UPF0060 family.</text>
</comment>
<organism>
    <name type="scientific">Desulfitobacterium hafniense (strain Y51)</name>
    <dbReference type="NCBI Taxonomy" id="138119"/>
    <lineage>
        <taxon>Bacteria</taxon>
        <taxon>Bacillati</taxon>
        <taxon>Bacillota</taxon>
        <taxon>Clostridia</taxon>
        <taxon>Eubacteriales</taxon>
        <taxon>Desulfitobacteriaceae</taxon>
        <taxon>Desulfitobacterium</taxon>
    </lineage>
</organism>
<feature type="chain" id="PRO_0000282220" description="UPF0060 membrane protein DSY4157">
    <location>
        <begin position="1"/>
        <end position="108"/>
    </location>
</feature>
<feature type="transmembrane region" description="Helical" evidence="1">
    <location>
        <begin position="6"/>
        <end position="26"/>
    </location>
</feature>
<feature type="transmembrane region" description="Helical" evidence="1">
    <location>
        <begin position="31"/>
        <end position="51"/>
    </location>
</feature>
<feature type="transmembrane region" description="Helical" evidence="1">
    <location>
        <begin position="60"/>
        <end position="80"/>
    </location>
</feature>
<feature type="transmembrane region" description="Helical" evidence="1">
    <location>
        <begin position="86"/>
        <end position="106"/>
    </location>
</feature>